<gene>
    <name evidence="8" type="primary">APC13</name>
    <name evidence="9" type="synonym">BNS</name>
    <name evidence="11" type="ordered locus">At1g73177</name>
    <name type="ORF">T18K17</name>
</gene>
<keyword id="KW-0131">Cell cycle</keyword>
<keyword id="KW-0132">Cell division</keyword>
<keyword id="KW-0217">Developmental protein</keyword>
<keyword id="KW-0498">Mitosis</keyword>
<keyword id="KW-0539">Nucleus</keyword>
<keyword id="KW-1185">Reference proteome</keyword>
<keyword id="KW-0833">Ubl conjugation pathway</keyword>
<evidence type="ECO:0000250" key="1">
    <source>
        <dbReference type="UniProtKB" id="Q9BS18"/>
    </source>
</evidence>
<evidence type="ECO:0000256" key="2">
    <source>
        <dbReference type="SAM" id="MobiDB-lite"/>
    </source>
</evidence>
<evidence type="ECO:0000269" key="3">
    <source>
    </source>
</evidence>
<evidence type="ECO:0000269" key="4">
    <source>
    </source>
</evidence>
<evidence type="ECO:0000269" key="5">
    <source>
    </source>
</evidence>
<evidence type="ECO:0000269" key="6">
    <source>
    </source>
</evidence>
<evidence type="ECO:0000269" key="7">
    <source>
    </source>
</evidence>
<evidence type="ECO:0000303" key="8">
    <source>
    </source>
</evidence>
<evidence type="ECO:0000303" key="9">
    <source>
    </source>
</evidence>
<evidence type="ECO:0000305" key="10"/>
<evidence type="ECO:0000312" key="11">
    <source>
        <dbReference type="Araport" id="AT1G73177"/>
    </source>
</evidence>
<evidence type="ECO:0000312" key="12">
    <source>
        <dbReference type="EMBL" id="AAM66119.1"/>
    </source>
</evidence>
<protein>
    <recommendedName>
        <fullName evidence="8">Anaphase-promoting complex subunit 13</fullName>
    </recommendedName>
    <alternativeName>
        <fullName evidence="9">Protein BONSAI</fullName>
    </alternativeName>
</protein>
<sequence>MAEVSLGMLIDIVDEEWMRDTLPDDDLPLPPVLAVKTDDTEETNQETQQADAETWRDLALDTQ</sequence>
<comment type="function">
    <text evidence="1 4 5">Component of the anaphase promoting complex/cyclosome (APC/C), a cell cycle-regulated E3 ubiquitin ligase that controls progression through mitosis and the G1 phase of the cell cycle. The APC/C complex acts by mediating ubiquitination and subsequent degradation of target proteins (By similarity). Regulates global growth and development, including phyllotaxis and apical dominance (PubMed:17627280). Required for pollen maturation. Promotes (pri) miRNA transcription of each MIR159 genes (PubMed:21441434).</text>
</comment>
<comment type="pathway">
    <text evidence="1">Protein modification; protein ubiquitination.</text>
</comment>
<comment type="subunit">
    <text evidence="1">Component of the anaphase promoting complex/cyclosome (APC/C) complex.</text>
</comment>
<comment type="subcellular location">
    <subcellularLocation>
        <location evidence="1">Nucleus</location>
    </subcellularLocation>
</comment>
<comment type="tissue specificity">
    <text evidence="4">Expressed constitutively in roots, leaves, stems, buds, flowers, and seeds.</text>
</comment>
<comment type="induction">
    <text evidence="4 6">Regulated by epigenetic histone methylation on H3K9me in a KYP and CMT3-dependent manner.</text>
</comment>
<comment type="disruption phenotype">
    <text evidence="3 4 5 7">Abnormalities in shoot and inflorescence development leading to the 'bonsai' phenotype characterized by short, compact inflorescence, resulting in reduced plant height, disrupted phyllotaxis, reduced apical dominance and production of clusters of bracts and flowers at the apex of the inflorescence (PubMed:16117643, PubMed:17627280, PubMed:9450349). Reduced seed set mostly due to impaired pollen maturation and thus abnormal male transmission. Defects in mature miRNA miR159 accumulation (PubMed:21441434).</text>
</comment>
<comment type="similarity">
    <text evidence="10">Belongs to the APC13 family.</text>
</comment>
<dbReference type="EMBL" id="AC010556">
    <property type="status" value="NOT_ANNOTATED_CDS"/>
    <property type="molecule type" value="Genomic_DNA"/>
</dbReference>
<dbReference type="EMBL" id="CP002684">
    <property type="protein sequence ID" value="AEE35424.1"/>
    <property type="molecule type" value="Genomic_DNA"/>
</dbReference>
<dbReference type="EMBL" id="BT025015">
    <property type="protein sequence ID" value="ABE02390.1"/>
    <property type="molecule type" value="mRNA"/>
</dbReference>
<dbReference type="EMBL" id="AY088589">
    <property type="protein sequence ID" value="AAM66119.1"/>
    <property type="molecule type" value="mRNA"/>
</dbReference>
<dbReference type="RefSeq" id="NP_565057.1">
    <property type="nucleotide sequence ID" value="NM_105976.3"/>
</dbReference>
<dbReference type="SMR" id="Q8L981"/>
<dbReference type="FunCoup" id="Q8L981">
    <property type="interactions" value="20"/>
</dbReference>
<dbReference type="STRING" id="3702.Q8L981"/>
<dbReference type="PaxDb" id="3702-AT1G73177.1"/>
<dbReference type="ProteomicsDB" id="244461"/>
<dbReference type="EnsemblPlants" id="AT1G73177.1">
    <property type="protein sequence ID" value="AT1G73177.1"/>
    <property type="gene ID" value="AT1G73177"/>
</dbReference>
<dbReference type="GeneID" id="843651"/>
<dbReference type="Gramene" id="AT1G73177.1">
    <property type="protein sequence ID" value="AT1G73177.1"/>
    <property type="gene ID" value="AT1G73177"/>
</dbReference>
<dbReference type="KEGG" id="ath:AT1G73177"/>
<dbReference type="Araport" id="AT1G73177"/>
<dbReference type="TAIR" id="AT1G73177">
    <property type="gene designation" value="BNS"/>
</dbReference>
<dbReference type="eggNOG" id="ENOG502S8ST">
    <property type="taxonomic scope" value="Eukaryota"/>
</dbReference>
<dbReference type="HOGENOM" id="CLU_183994_0_0_1"/>
<dbReference type="InParanoid" id="Q8L981"/>
<dbReference type="OMA" id="ALENHRH"/>
<dbReference type="UniPathway" id="UPA00143"/>
<dbReference type="PRO" id="PR:Q8L981"/>
<dbReference type="Proteomes" id="UP000006548">
    <property type="component" value="Chromosome 1"/>
</dbReference>
<dbReference type="ExpressionAtlas" id="Q8L981">
    <property type="expression patterns" value="baseline and differential"/>
</dbReference>
<dbReference type="GO" id="GO:0005680">
    <property type="term" value="C:anaphase-promoting complex"/>
    <property type="evidence" value="ECO:0000250"/>
    <property type="project" value="TAIR"/>
</dbReference>
<dbReference type="GO" id="GO:0051301">
    <property type="term" value="P:cell division"/>
    <property type="evidence" value="ECO:0007669"/>
    <property type="project" value="UniProtKB-KW"/>
</dbReference>
<dbReference type="GO" id="GO:0010229">
    <property type="term" value="P:inflorescence development"/>
    <property type="evidence" value="ECO:0000315"/>
    <property type="project" value="TAIR"/>
</dbReference>
<dbReference type="GO" id="GO:0061614">
    <property type="term" value="P:miRNA transcription"/>
    <property type="evidence" value="ECO:0000315"/>
    <property type="project" value="UniProtKB"/>
</dbReference>
<dbReference type="GO" id="GO:0048827">
    <property type="term" value="P:phyllome development"/>
    <property type="evidence" value="ECO:0000315"/>
    <property type="project" value="TAIR"/>
</dbReference>
<dbReference type="GO" id="GO:0010152">
    <property type="term" value="P:pollen maturation"/>
    <property type="evidence" value="ECO:0000315"/>
    <property type="project" value="UniProtKB"/>
</dbReference>
<dbReference type="GO" id="GO:0016567">
    <property type="term" value="P:protein ubiquitination"/>
    <property type="evidence" value="ECO:0007669"/>
    <property type="project" value="UniProtKB-UniPathway"/>
</dbReference>
<dbReference type="InterPro" id="IPR008401">
    <property type="entry name" value="Apc13"/>
</dbReference>
<dbReference type="PANTHER" id="PTHR28672">
    <property type="entry name" value="ANAPHASE-PROMOTING COMPLEX SUBUNIT 13"/>
    <property type="match status" value="1"/>
</dbReference>
<dbReference type="PANTHER" id="PTHR28672:SF1">
    <property type="entry name" value="ANAPHASE-PROMOTING COMPLEX SUBUNIT 13"/>
    <property type="match status" value="1"/>
</dbReference>
<reference key="1">
    <citation type="journal article" date="2000" name="Nature">
        <title>Sequence and analysis of chromosome 1 of the plant Arabidopsis thaliana.</title>
        <authorList>
            <person name="Theologis A."/>
            <person name="Ecker J.R."/>
            <person name="Palm C.J."/>
            <person name="Federspiel N.A."/>
            <person name="Kaul S."/>
            <person name="White O."/>
            <person name="Alonso J."/>
            <person name="Altafi H."/>
            <person name="Araujo R."/>
            <person name="Bowman C.L."/>
            <person name="Brooks S.Y."/>
            <person name="Buehler E."/>
            <person name="Chan A."/>
            <person name="Chao Q."/>
            <person name="Chen H."/>
            <person name="Cheuk R.F."/>
            <person name="Chin C.W."/>
            <person name="Chung M.K."/>
            <person name="Conn L."/>
            <person name="Conway A.B."/>
            <person name="Conway A.R."/>
            <person name="Creasy T.H."/>
            <person name="Dewar K."/>
            <person name="Dunn P."/>
            <person name="Etgu P."/>
            <person name="Feldblyum T.V."/>
            <person name="Feng J.-D."/>
            <person name="Fong B."/>
            <person name="Fujii C.Y."/>
            <person name="Gill J.E."/>
            <person name="Goldsmith A.D."/>
            <person name="Haas B."/>
            <person name="Hansen N.F."/>
            <person name="Hughes B."/>
            <person name="Huizar L."/>
            <person name="Hunter J.L."/>
            <person name="Jenkins J."/>
            <person name="Johnson-Hopson C."/>
            <person name="Khan S."/>
            <person name="Khaykin E."/>
            <person name="Kim C.J."/>
            <person name="Koo H.L."/>
            <person name="Kremenetskaia I."/>
            <person name="Kurtz D.B."/>
            <person name="Kwan A."/>
            <person name="Lam B."/>
            <person name="Langin-Hooper S."/>
            <person name="Lee A."/>
            <person name="Lee J.M."/>
            <person name="Lenz C.A."/>
            <person name="Li J.H."/>
            <person name="Li Y.-P."/>
            <person name="Lin X."/>
            <person name="Liu S.X."/>
            <person name="Liu Z.A."/>
            <person name="Luros J.S."/>
            <person name="Maiti R."/>
            <person name="Marziali A."/>
            <person name="Militscher J."/>
            <person name="Miranda M."/>
            <person name="Nguyen M."/>
            <person name="Nierman W.C."/>
            <person name="Osborne B.I."/>
            <person name="Pai G."/>
            <person name="Peterson J."/>
            <person name="Pham P.K."/>
            <person name="Rizzo M."/>
            <person name="Rooney T."/>
            <person name="Rowley D."/>
            <person name="Sakano H."/>
            <person name="Salzberg S.L."/>
            <person name="Schwartz J.R."/>
            <person name="Shinn P."/>
            <person name="Southwick A.M."/>
            <person name="Sun H."/>
            <person name="Tallon L.J."/>
            <person name="Tambunga G."/>
            <person name="Toriumi M.J."/>
            <person name="Town C.D."/>
            <person name="Utterback T."/>
            <person name="Van Aken S."/>
            <person name="Vaysberg M."/>
            <person name="Vysotskaia V.S."/>
            <person name="Walker M."/>
            <person name="Wu D."/>
            <person name="Yu G."/>
            <person name="Fraser C.M."/>
            <person name="Venter J.C."/>
            <person name="Davis R.W."/>
        </authorList>
    </citation>
    <scope>NUCLEOTIDE SEQUENCE [LARGE SCALE GENOMIC DNA]</scope>
    <source>
        <strain>cv. Columbia</strain>
    </source>
</reference>
<reference key="2">
    <citation type="journal article" date="2017" name="Plant J.">
        <title>Araport11: a complete reannotation of the Arabidopsis thaliana reference genome.</title>
        <authorList>
            <person name="Cheng C.Y."/>
            <person name="Krishnakumar V."/>
            <person name="Chan A.P."/>
            <person name="Thibaud-Nissen F."/>
            <person name="Schobel S."/>
            <person name="Town C.D."/>
        </authorList>
    </citation>
    <scope>GENOME REANNOTATION</scope>
    <source>
        <strain>cv. Columbia</strain>
    </source>
</reference>
<reference key="3">
    <citation type="submission" date="2006-04" db="EMBL/GenBank/DDBJ databases">
        <title>Arabidopsis ORF clones.</title>
        <authorList>
            <person name="Shinn P."/>
            <person name="Chen H."/>
            <person name="Kim C.J."/>
            <person name="Ecker J.R."/>
        </authorList>
    </citation>
    <scope>NUCLEOTIDE SEQUENCE [LARGE SCALE MRNA]</scope>
    <source>
        <strain>cv. Columbia</strain>
    </source>
</reference>
<reference key="4">
    <citation type="submission" date="2002-03" db="EMBL/GenBank/DDBJ databases">
        <title>Full-length cDNA from Arabidopsis thaliana.</title>
        <authorList>
            <person name="Brover V.V."/>
            <person name="Troukhan M.E."/>
            <person name="Alexandrov N.A."/>
            <person name="Lu Y.-P."/>
            <person name="Flavell R.B."/>
            <person name="Feldmann K.A."/>
        </authorList>
    </citation>
    <scope>NUCLEOTIDE SEQUENCE [LARGE SCALE MRNA]</scope>
</reference>
<reference key="5">
    <citation type="journal article" date="1997" name="Plant J.">
        <title>Genetic characterization of late-flowering traits induced by DNA hypomethylation mutation in Arabidopsis thaliana.</title>
        <authorList>
            <person name="Kakutani T."/>
        </authorList>
    </citation>
    <scope>DISRUPTION PHENOTYPE</scope>
    <source>
        <strain>cv. Columbia</strain>
    </source>
</reference>
<reference key="6">
    <citation type="journal article" date="2004" name="Cold Spring Harb. Symp. Quant. Biol.">
        <title>Control of development and transposon movement by DNA methylation in Arabidopsis thaliana.</title>
        <authorList>
            <person name="Kakutani T."/>
            <person name="Kato M."/>
            <person name="Kinoshita T."/>
            <person name="Miura A."/>
        </authorList>
    </citation>
    <scope>DISRUPTION PHENOTYPE</scope>
    <source>
        <strain>cv. Columbia</strain>
    </source>
</reference>
<reference key="7">
    <citation type="journal article" date="2007" name="EMBO J.">
        <title>Heritable epigenetic mutation of a transposon-flanked Arabidopsis gene due to lack of the chromatin-remodeling factor DDM1.</title>
        <authorList>
            <person name="Saze H."/>
            <person name="Kakutani T."/>
        </authorList>
    </citation>
    <scope>FUNCTION</scope>
    <scope>DISRUPTION PHENOTYPE</scope>
    <scope>TISSUE SPECIFICITY</scope>
    <scope>INDUCTION BY EPIGENETIC METHYLATION</scope>
    <source>
        <strain>cv. Columbia</strain>
    </source>
</reference>
<reference key="8">
    <citation type="journal article" date="2011" name="Plant Cell">
        <title>The anaphase-promoting complex is a dual integrator that regulates both MicroRNA-mediated transcriptional regulation of cyclin B1 and degradation of Cyclin B1 during Arabidopsis male gametophyte development.</title>
        <authorList>
            <person name="Zheng B."/>
            <person name="Chen X."/>
            <person name="McCormick S."/>
        </authorList>
    </citation>
    <scope>FUNCTION</scope>
    <scope>DISRUPTION PHENOTYPE</scope>
    <source>
        <strain>cv. Columbia</strain>
    </source>
</reference>
<reference key="9">
    <citation type="journal article" date="2012" name="Plant J.">
        <title>RNAi-independent de novo DNA methylation revealed in Arabidopsis mutants of chromatin remodeling gene DDM1.</title>
        <authorList>
            <person name="Sasaki T."/>
            <person name="Kobayashi A."/>
            <person name="Saze H."/>
            <person name="Kakutani T."/>
        </authorList>
    </citation>
    <scope>INDUCTION BY EPIGENETIC METHYLATION</scope>
</reference>
<organism evidence="12">
    <name type="scientific">Arabidopsis thaliana</name>
    <name type="common">Mouse-ear cress</name>
    <dbReference type="NCBI Taxonomy" id="3702"/>
    <lineage>
        <taxon>Eukaryota</taxon>
        <taxon>Viridiplantae</taxon>
        <taxon>Streptophyta</taxon>
        <taxon>Embryophyta</taxon>
        <taxon>Tracheophyta</taxon>
        <taxon>Spermatophyta</taxon>
        <taxon>Magnoliopsida</taxon>
        <taxon>eudicotyledons</taxon>
        <taxon>Gunneridae</taxon>
        <taxon>Pentapetalae</taxon>
        <taxon>rosids</taxon>
        <taxon>malvids</taxon>
        <taxon>Brassicales</taxon>
        <taxon>Brassicaceae</taxon>
        <taxon>Camelineae</taxon>
        <taxon>Arabidopsis</taxon>
    </lineage>
</organism>
<proteinExistence type="evidence at protein level"/>
<feature type="chain" id="PRO_0000436433" description="Anaphase-promoting complex subunit 13">
    <location>
        <begin position="1"/>
        <end position="63"/>
    </location>
</feature>
<feature type="region of interest" description="Disordered" evidence="2">
    <location>
        <begin position="36"/>
        <end position="63"/>
    </location>
</feature>
<feature type="compositionally biased region" description="Basic and acidic residues" evidence="2">
    <location>
        <begin position="53"/>
        <end position="63"/>
    </location>
</feature>
<name>APC13_ARATH</name>
<accession>Q8L981</accession>